<feature type="chain" id="PRO_0000151117" description="Undecaprenyl-diphosphatase">
    <location>
        <begin position="1"/>
        <end position="287"/>
    </location>
</feature>
<feature type="transmembrane region" description="Helical" evidence="1">
    <location>
        <begin position="6"/>
        <end position="26"/>
    </location>
</feature>
<feature type="transmembrane region" description="Helical" evidence="1">
    <location>
        <begin position="45"/>
        <end position="65"/>
    </location>
</feature>
<feature type="transmembrane region" description="Helical" evidence="1">
    <location>
        <begin position="89"/>
        <end position="109"/>
    </location>
</feature>
<feature type="transmembrane region" description="Helical" evidence="1">
    <location>
        <begin position="111"/>
        <end position="131"/>
    </location>
</feature>
<feature type="transmembrane region" description="Helical" evidence="1">
    <location>
        <begin position="204"/>
        <end position="224"/>
    </location>
</feature>
<feature type="transmembrane region" description="Helical" evidence="1">
    <location>
        <begin position="238"/>
        <end position="258"/>
    </location>
</feature>
<feature type="transmembrane region" description="Helical" evidence="1">
    <location>
        <begin position="266"/>
        <end position="286"/>
    </location>
</feature>
<name>UPPP_BORPE</name>
<keyword id="KW-0046">Antibiotic resistance</keyword>
<keyword id="KW-0997">Cell inner membrane</keyword>
<keyword id="KW-1003">Cell membrane</keyword>
<keyword id="KW-0133">Cell shape</keyword>
<keyword id="KW-0961">Cell wall biogenesis/degradation</keyword>
<keyword id="KW-0378">Hydrolase</keyword>
<keyword id="KW-0472">Membrane</keyword>
<keyword id="KW-0573">Peptidoglycan synthesis</keyword>
<keyword id="KW-1185">Reference proteome</keyword>
<keyword id="KW-0812">Transmembrane</keyword>
<keyword id="KW-1133">Transmembrane helix</keyword>
<protein>
    <recommendedName>
        <fullName evidence="1">Undecaprenyl-diphosphatase</fullName>
        <ecNumber evidence="1">3.6.1.27</ecNumber>
    </recommendedName>
    <alternativeName>
        <fullName evidence="1">Bacitracin resistance protein</fullName>
    </alternativeName>
    <alternativeName>
        <fullName evidence="1">Undecaprenyl pyrophosphate phosphatase</fullName>
    </alternativeName>
</protein>
<sequence length="287" mass="31000">MTDSTLHLLKAFFLGIVEGLTEFIPVSSTGHLIVIGDWINFASSSGKVFEVVIQFGSILAVMWIFRARLWQLIRGTLTGVRQEVNFTRNLLLAFLPAAVIGAIFIKSIKQVFYHPGVVAVTLVVGGFIMLWVERRAPHTPGDAPGAADDTASDERASAHTLEQISAKQALGVGVAQCVAMIPGVSRSGATIIGGMIAGIQRKTATEFSFFLAMPTMLGAAVYDLYRNIGLLSQHDMSAIAVGFVAAFLSALVVVRAVLRFVANHTYRVFAWYRIALGLVVAAWIYAK</sequence>
<organism>
    <name type="scientific">Bordetella pertussis (strain Tohama I / ATCC BAA-589 / NCTC 13251)</name>
    <dbReference type="NCBI Taxonomy" id="257313"/>
    <lineage>
        <taxon>Bacteria</taxon>
        <taxon>Pseudomonadati</taxon>
        <taxon>Pseudomonadota</taxon>
        <taxon>Betaproteobacteria</taxon>
        <taxon>Burkholderiales</taxon>
        <taxon>Alcaligenaceae</taxon>
        <taxon>Bordetella</taxon>
    </lineage>
</organism>
<evidence type="ECO:0000255" key="1">
    <source>
        <dbReference type="HAMAP-Rule" id="MF_01006"/>
    </source>
</evidence>
<dbReference type="EC" id="3.6.1.27" evidence="1"/>
<dbReference type="EMBL" id="BX640416">
    <property type="protein sequence ID" value="CAE42186.1"/>
    <property type="molecule type" value="Genomic_DNA"/>
</dbReference>
<dbReference type="RefSeq" id="NP_880590.1">
    <property type="nucleotide sequence ID" value="NC_002929.2"/>
</dbReference>
<dbReference type="RefSeq" id="WP_010930627.1">
    <property type="nucleotide sequence ID" value="NZ_CP039022.1"/>
</dbReference>
<dbReference type="SMR" id="Q7VXA0"/>
<dbReference type="STRING" id="257313.BP1904"/>
<dbReference type="PaxDb" id="257313-BP1904"/>
<dbReference type="KEGG" id="bpe:BP1904"/>
<dbReference type="PATRIC" id="fig|257313.5.peg.2044"/>
<dbReference type="eggNOG" id="COG1968">
    <property type="taxonomic scope" value="Bacteria"/>
</dbReference>
<dbReference type="HOGENOM" id="CLU_060296_2_0_4"/>
<dbReference type="Proteomes" id="UP000002676">
    <property type="component" value="Chromosome"/>
</dbReference>
<dbReference type="GO" id="GO:0005886">
    <property type="term" value="C:plasma membrane"/>
    <property type="evidence" value="ECO:0007669"/>
    <property type="project" value="UniProtKB-SubCell"/>
</dbReference>
<dbReference type="GO" id="GO:0050380">
    <property type="term" value="F:undecaprenyl-diphosphatase activity"/>
    <property type="evidence" value="ECO:0007669"/>
    <property type="project" value="UniProtKB-UniRule"/>
</dbReference>
<dbReference type="GO" id="GO:0071555">
    <property type="term" value="P:cell wall organization"/>
    <property type="evidence" value="ECO:0007669"/>
    <property type="project" value="UniProtKB-KW"/>
</dbReference>
<dbReference type="GO" id="GO:0009252">
    <property type="term" value="P:peptidoglycan biosynthetic process"/>
    <property type="evidence" value="ECO:0007669"/>
    <property type="project" value="UniProtKB-KW"/>
</dbReference>
<dbReference type="GO" id="GO:0008360">
    <property type="term" value="P:regulation of cell shape"/>
    <property type="evidence" value="ECO:0007669"/>
    <property type="project" value="UniProtKB-KW"/>
</dbReference>
<dbReference type="GO" id="GO:0046677">
    <property type="term" value="P:response to antibiotic"/>
    <property type="evidence" value="ECO:0007669"/>
    <property type="project" value="UniProtKB-UniRule"/>
</dbReference>
<dbReference type="HAMAP" id="MF_01006">
    <property type="entry name" value="Undec_diphosphatase"/>
    <property type="match status" value="1"/>
</dbReference>
<dbReference type="InterPro" id="IPR003824">
    <property type="entry name" value="UppP"/>
</dbReference>
<dbReference type="NCBIfam" id="NF001389">
    <property type="entry name" value="PRK00281.1-2"/>
    <property type="match status" value="1"/>
</dbReference>
<dbReference type="NCBIfam" id="NF001390">
    <property type="entry name" value="PRK00281.1-4"/>
    <property type="match status" value="1"/>
</dbReference>
<dbReference type="PANTHER" id="PTHR30622">
    <property type="entry name" value="UNDECAPRENYL-DIPHOSPHATASE"/>
    <property type="match status" value="1"/>
</dbReference>
<dbReference type="PANTHER" id="PTHR30622:SF3">
    <property type="entry name" value="UNDECAPRENYL-DIPHOSPHATASE"/>
    <property type="match status" value="1"/>
</dbReference>
<dbReference type="Pfam" id="PF02673">
    <property type="entry name" value="BacA"/>
    <property type="match status" value="1"/>
</dbReference>
<gene>
    <name evidence="1" type="primary">uppP</name>
    <name type="synonym">bacA</name>
    <name type="synonym">upk</name>
    <name type="ordered locus">BP1904</name>
</gene>
<proteinExistence type="inferred from homology"/>
<comment type="function">
    <text evidence="1">Catalyzes the dephosphorylation of undecaprenyl diphosphate (UPP). Confers resistance to bacitracin.</text>
</comment>
<comment type="catalytic activity">
    <reaction evidence="1">
        <text>di-trans,octa-cis-undecaprenyl diphosphate + H2O = di-trans,octa-cis-undecaprenyl phosphate + phosphate + H(+)</text>
        <dbReference type="Rhea" id="RHEA:28094"/>
        <dbReference type="ChEBI" id="CHEBI:15377"/>
        <dbReference type="ChEBI" id="CHEBI:15378"/>
        <dbReference type="ChEBI" id="CHEBI:43474"/>
        <dbReference type="ChEBI" id="CHEBI:58405"/>
        <dbReference type="ChEBI" id="CHEBI:60392"/>
        <dbReference type="EC" id="3.6.1.27"/>
    </reaction>
</comment>
<comment type="subcellular location">
    <subcellularLocation>
        <location evidence="1">Cell inner membrane</location>
        <topology evidence="1">Multi-pass membrane protein</topology>
    </subcellularLocation>
</comment>
<comment type="miscellaneous">
    <text>Bacitracin is thought to be involved in the inhibition of peptidoglycan synthesis by sequestering undecaprenyl diphosphate, thereby reducing the pool of lipid carrier available.</text>
</comment>
<comment type="similarity">
    <text evidence="1">Belongs to the UppP family.</text>
</comment>
<reference key="1">
    <citation type="journal article" date="2003" name="Nat. Genet.">
        <title>Comparative analysis of the genome sequences of Bordetella pertussis, Bordetella parapertussis and Bordetella bronchiseptica.</title>
        <authorList>
            <person name="Parkhill J."/>
            <person name="Sebaihia M."/>
            <person name="Preston A."/>
            <person name="Murphy L.D."/>
            <person name="Thomson N.R."/>
            <person name="Harris D.E."/>
            <person name="Holden M.T.G."/>
            <person name="Churcher C.M."/>
            <person name="Bentley S.D."/>
            <person name="Mungall K.L."/>
            <person name="Cerdeno-Tarraga A.-M."/>
            <person name="Temple L."/>
            <person name="James K.D."/>
            <person name="Harris B."/>
            <person name="Quail M.A."/>
            <person name="Achtman M."/>
            <person name="Atkin R."/>
            <person name="Baker S."/>
            <person name="Basham D."/>
            <person name="Bason N."/>
            <person name="Cherevach I."/>
            <person name="Chillingworth T."/>
            <person name="Collins M."/>
            <person name="Cronin A."/>
            <person name="Davis P."/>
            <person name="Doggett J."/>
            <person name="Feltwell T."/>
            <person name="Goble A."/>
            <person name="Hamlin N."/>
            <person name="Hauser H."/>
            <person name="Holroyd S."/>
            <person name="Jagels K."/>
            <person name="Leather S."/>
            <person name="Moule S."/>
            <person name="Norberczak H."/>
            <person name="O'Neil S."/>
            <person name="Ormond D."/>
            <person name="Price C."/>
            <person name="Rabbinowitsch E."/>
            <person name="Rutter S."/>
            <person name="Sanders M."/>
            <person name="Saunders D."/>
            <person name="Seeger K."/>
            <person name="Sharp S."/>
            <person name="Simmonds M."/>
            <person name="Skelton J."/>
            <person name="Squares R."/>
            <person name="Squares S."/>
            <person name="Stevens K."/>
            <person name="Unwin L."/>
            <person name="Whitehead S."/>
            <person name="Barrell B.G."/>
            <person name="Maskell D.J."/>
        </authorList>
    </citation>
    <scope>NUCLEOTIDE SEQUENCE [LARGE SCALE GENOMIC DNA]</scope>
    <source>
        <strain>Tohama I / ATCC BAA-589 / NCTC 13251</strain>
    </source>
</reference>
<accession>Q7VXA0</accession>